<gene>
    <name type="primary">mug154</name>
    <name type="ORF">SPCC4G3.11</name>
</gene>
<protein>
    <recommendedName>
        <fullName>Meiotically up-regulated gene 154 protein</fullName>
    </recommendedName>
</protein>
<accession>P87236</accession>
<evidence type="ECO:0000255" key="1"/>
<evidence type="ECO:0000256" key="2">
    <source>
        <dbReference type="SAM" id="MobiDB-lite"/>
    </source>
</evidence>
<evidence type="ECO:0000269" key="3">
    <source>
    </source>
</evidence>
<evidence type="ECO:0000269" key="4">
    <source>
    </source>
</evidence>
<feature type="chain" id="PRO_0000278509" description="Meiotically up-regulated gene 154 protein">
    <location>
        <begin position="1"/>
        <end position="316"/>
    </location>
</feature>
<feature type="transmembrane region" description="Helical" evidence="1">
    <location>
        <begin position="41"/>
        <end position="61"/>
    </location>
</feature>
<feature type="transmembrane region" description="Helical" evidence="1">
    <location>
        <begin position="88"/>
        <end position="108"/>
    </location>
</feature>
<feature type="transmembrane region" description="Helical" evidence="1">
    <location>
        <begin position="159"/>
        <end position="179"/>
    </location>
</feature>
<feature type="transmembrane region" description="Helical" evidence="1">
    <location>
        <begin position="186"/>
        <end position="206"/>
    </location>
</feature>
<feature type="region of interest" description="Disordered" evidence="2">
    <location>
        <begin position="291"/>
        <end position="316"/>
    </location>
</feature>
<organism>
    <name type="scientific">Schizosaccharomyces pombe (strain 972 / ATCC 24843)</name>
    <name type="common">Fission yeast</name>
    <dbReference type="NCBI Taxonomy" id="284812"/>
    <lineage>
        <taxon>Eukaryota</taxon>
        <taxon>Fungi</taxon>
        <taxon>Dikarya</taxon>
        <taxon>Ascomycota</taxon>
        <taxon>Taphrinomycotina</taxon>
        <taxon>Schizosaccharomycetes</taxon>
        <taxon>Schizosaccharomycetales</taxon>
        <taxon>Schizosaccharomycetaceae</taxon>
        <taxon>Schizosaccharomyces</taxon>
    </lineage>
</organism>
<dbReference type="EMBL" id="CU329672">
    <property type="protein sequence ID" value="CAB09766.1"/>
    <property type="molecule type" value="Genomic_DNA"/>
</dbReference>
<dbReference type="PIR" id="T41365">
    <property type="entry name" value="T41365"/>
</dbReference>
<dbReference type="RefSeq" id="NP_587827.1">
    <property type="nucleotide sequence ID" value="NM_001022820.2"/>
</dbReference>
<dbReference type="BioGRID" id="275941">
    <property type="interactions" value="247"/>
</dbReference>
<dbReference type="FunCoup" id="P87236">
    <property type="interactions" value="44"/>
</dbReference>
<dbReference type="STRING" id="284812.P87236"/>
<dbReference type="iPTMnet" id="P87236"/>
<dbReference type="PaxDb" id="4896-SPCC4G3.11.1"/>
<dbReference type="EnsemblFungi" id="SPCC4G3.11.1">
    <property type="protein sequence ID" value="SPCC4G3.11.1:pep"/>
    <property type="gene ID" value="SPCC4G3.11"/>
</dbReference>
<dbReference type="GeneID" id="2539375"/>
<dbReference type="KEGG" id="spo:2539375"/>
<dbReference type="PomBase" id="SPCC4G3.11">
    <property type="gene designation" value="mug154"/>
</dbReference>
<dbReference type="VEuPathDB" id="FungiDB:SPCC4G3.11"/>
<dbReference type="eggNOG" id="ENOG502QV5S">
    <property type="taxonomic scope" value="Eukaryota"/>
</dbReference>
<dbReference type="HOGENOM" id="CLU_839665_0_0_1"/>
<dbReference type="InParanoid" id="P87236"/>
<dbReference type="OMA" id="SERWSIP"/>
<dbReference type="PhylomeDB" id="P87236"/>
<dbReference type="PRO" id="PR:P87236"/>
<dbReference type="Proteomes" id="UP000002485">
    <property type="component" value="Chromosome III"/>
</dbReference>
<dbReference type="GO" id="GO:0061638">
    <property type="term" value="C:CENP-A containing chromatin"/>
    <property type="evidence" value="ECO:0000314"/>
    <property type="project" value="PomBase"/>
</dbReference>
<dbReference type="GO" id="GO:0034506">
    <property type="term" value="C:chromosome, centromeric core domain"/>
    <property type="evidence" value="ECO:0000314"/>
    <property type="project" value="CACAO"/>
</dbReference>
<dbReference type="GO" id="GO:0005783">
    <property type="term" value="C:endoplasmic reticulum"/>
    <property type="evidence" value="ECO:0007005"/>
    <property type="project" value="PomBase"/>
</dbReference>
<dbReference type="GO" id="GO:0005789">
    <property type="term" value="C:endoplasmic reticulum membrane"/>
    <property type="evidence" value="ECO:0007669"/>
    <property type="project" value="UniProtKB-SubCell"/>
</dbReference>
<dbReference type="GO" id="GO:0005634">
    <property type="term" value="C:nucleus"/>
    <property type="evidence" value="ECO:0000303"/>
    <property type="project" value="PomBase"/>
</dbReference>
<dbReference type="GO" id="GO:0070828">
    <property type="term" value="P:heterochromatin organization"/>
    <property type="evidence" value="ECO:0000269"/>
    <property type="project" value="PomBase"/>
</dbReference>
<dbReference type="GO" id="GO:0043007">
    <property type="term" value="P:maintenance of rDNA"/>
    <property type="evidence" value="ECO:0000318"/>
    <property type="project" value="GO_Central"/>
</dbReference>
<dbReference type="GO" id="GO:0051321">
    <property type="term" value="P:meiotic cell cycle"/>
    <property type="evidence" value="ECO:0007669"/>
    <property type="project" value="UniProtKB-KW"/>
</dbReference>
<dbReference type="GO" id="GO:0007096">
    <property type="term" value="P:regulation of exit from mitosis"/>
    <property type="evidence" value="ECO:0000318"/>
    <property type="project" value="GO_Central"/>
</dbReference>
<dbReference type="InterPro" id="IPR018819">
    <property type="entry name" value="Nur1/Mug154"/>
</dbReference>
<dbReference type="PANTHER" id="PTHR28293">
    <property type="entry name" value="NUCLEAR RIM PROTEIN 1"/>
    <property type="match status" value="1"/>
</dbReference>
<dbReference type="PANTHER" id="PTHR28293:SF1">
    <property type="entry name" value="NUCLEAR RIM PROTEIN 1"/>
    <property type="match status" value="1"/>
</dbReference>
<dbReference type="Pfam" id="PF10332">
    <property type="entry name" value="DUF2418"/>
    <property type="match status" value="1"/>
</dbReference>
<reference key="1">
    <citation type="journal article" date="2002" name="Nature">
        <title>The genome sequence of Schizosaccharomyces pombe.</title>
        <authorList>
            <person name="Wood V."/>
            <person name="Gwilliam R."/>
            <person name="Rajandream M.A."/>
            <person name="Lyne M.H."/>
            <person name="Lyne R."/>
            <person name="Stewart A."/>
            <person name="Sgouros J.G."/>
            <person name="Peat N."/>
            <person name="Hayles J."/>
            <person name="Baker S.G."/>
            <person name="Basham D."/>
            <person name="Bowman S."/>
            <person name="Brooks K."/>
            <person name="Brown D."/>
            <person name="Brown S."/>
            <person name="Chillingworth T."/>
            <person name="Churcher C.M."/>
            <person name="Collins M."/>
            <person name="Connor R."/>
            <person name="Cronin A."/>
            <person name="Davis P."/>
            <person name="Feltwell T."/>
            <person name="Fraser A."/>
            <person name="Gentles S."/>
            <person name="Goble A."/>
            <person name="Hamlin N."/>
            <person name="Harris D.E."/>
            <person name="Hidalgo J."/>
            <person name="Hodgson G."/>
            <person name="Holroyd S."/>
            <person name="Hornsby T."/>
            <person name="Howarth S."/>
            <person name="Huckle E.J."/>
            <person name="Hunt S."/>
            <person name="Jagels K."/>
            <person name="James K.D."/>
            <person name="Jones L."/>
            <person name="Jones M."/>
            <person name="Leather S."/>
            <person name="McDonald S."/>
            <person name="McLean J."/>
            <person name="Mooney P."/>
            <person name="Moule S."/>
            <person name="Mungall K.L."/>
            <person name="Murphy L.D."/>
            <person name="Niblett D."/>
            <person name="Odell C."/>
            <person name="Oliver K."/>
            <person name="O'Neil S."/>
            <person name="Pearson D."/>
            <person name="Quail M.A."/>
            <person name="Rabbinowitsch E."/>
            <person name="Rutherford K.M."/>
            <person name="Rutter S."/>
            <person name="Saunders D."/>
            <person name="Seeger K."/>
            <person name="Sharp S."/>
            <person name="Skelton J."/>
            <person name="Simmonds M.N."/>
            <person name="Squares R."/>
            <person name="Squares S."/>
            <person name="Stevens K."/>
            <person name="Taylor K."/>
            <person name="Taylor R.G."/>
            <person name="Tivey A."/>
            <person name="Walsh S.V."/>
            <person name="Warren T."/>
            <person name="Whitehead S."/>
            <person name="Woodward J.R."/>
            <person name="Volckaert G."/>
            <person name="Aert R."/>
            <person name="Robben J."/>
            <person name="Grymonprez B."/>
            <person name="Weltjens I."/>
            <person name="Vanstreels E."/>
            <person name="Rieger M."/>
            <person name="Schaefer M."/>
            <person name="Mueller-Auer S."/>
            <person name="Gabel C."/>
            <person name="Fuchs M."/>
            <person name="Duesterhoeft A."/>
            <person name="Fritzc C."/>
            <person name="Holzer E."/>
            <person name="Moestl D."/>
            <person name="Hilbert H."/>
            <person name="Borzym K."/>
            <person name="Langer I."/>
            <person name="Beck A."/>
            <person name="Lehrach H."/>
            <person name="Reinhardt R."/>
            <person name="Pohl T.M."/>
            <person name="Eger P."/>
            <person name="Zimmermann W."/>
            <person name="Wedler H."/>
            <person name="Wambutt R."/>
            <person name="Purnelle B."/>
            <person name="Goffeau A."/>
            <person name="Cadieu E."/>
            <person name="Dreano S."/>
            <person name="Gloux S."/>
            <person name="Lelaure V."/>
            <person name="Mottier S."/>
            <person name="Galibert F."/>
            <person name="Aves S.J."/>
            <person name="Xiang Z."/>
            <person name="Hunt C."/>
            <person name="Moore K."/>
            <person name="Hurst S.M."/>
            <person name="Lucas M."/>
            <person name="Rochet M."/>
            <person name="Gaillardin C."/>
            <person name="Tallada V.A."/>
            <person name="Garzon A."/>
            <person name="Thode G."/>
            <person name="Daga R.R."/>
            <person name="Cruzado L."/>
            <person name="Jimenez J."/>
            <person name="Sanchez M."/>
            <person name="del Rey F."/>
            <person name="Benito J."/>
            <person name="Dominguez A."/>
            <person name="Revuelta J.L."/>
            <person name="Moreno S."/>
            <person name="Armstrong J."/>
            <person name="Forsburg S.L."/>
            <person name="Cerutti L."/>
            <person name="Lowe T."/>
            <person name="McCombie W.R."/>
            <person name="Paulsen I."/>
            <person name="Potashkin J."/>
            <person name="Shpakovski G.V."/>
            <person name="Ussery D."/>
            <person name="Barrell B.G."/>
            <person name="Nurse P."/>
        </authorList>
    </citation>
    <scope>NUCLEOTIDE SEQUENCE [LARGE SCALE GENOMIC DNA]</scope>
    <source>
        <strain>972 / ATCC 24843</strain>
    </source>
</reference>
<reference key="2">
    <citation type="journal article" date="2005" name="Curr. Biol.">
        <title>A large-scale screen in S. pombe identifies seven novel genes required for critical meiotic events.</title>
        <authorList>
            <person name="Martin-Castellanos C."/>
            <person name="Blanco M."/>
            <person name="Rozalen A.E."/>
            <person name="Perez-Hidalgo L."/>
            <person name="Garcia A.I."/>
            <person name="Conde F."/>
            <person name="Mata J."/>
            <person name="Ellermeier C."/>
            <person name="Davis L."/>
            <person name="San-Segundo P."/>
            <person name="Smith G.R."/>
            <person name="Moreno S."/>
        </authorList>
    </citation>
    <scope>FUNCTION IN MEIOSIS</scope>
</reference>
<reference key="3">
    <citation type="journal article" date="2006" name="Nat. Biotechnol.">
        <title>ORFeome cloning and global analysis of protein localization in the fission yeast Schizosaccharomyces pombe.</title>
        <authorList>
            <person name="Matsuyama A."/>
            <person name="Arai R."/>
            <person name="Yashiroda Y."/>
            <person name="Shirai A."/>
            <person name="Kamata A."/>
            <person name="Sekido S."/>
            <person name="Kobayashi Y."/>
            <person name="Hashimoto A."/>
            <person name="Hamamoto M."/>
            <person name="Hiraoka Y."/>
            <person name="Horinouchi S."/>
            <person name="Yoshida M."/>
        </authorList>
    </citation>
    <scope>SUBCELLULAR LOCATION [LARGE SCALE ANALYSIS]</scope>
</reference>
<comment type="function">
    <text evidence="3">Has a role in meiosis.</text>
</comment>
<comment type="subcellular location">
    <subcellularLocation>
        <location evidence="4">Endoplasmic reticulum membrane</location>
        <topology evidence="4">Multi-pass membrane protein</topology>
    </subcellularLocation>
</comment>
<sequence length="316" mass="37138">MGKLIRRTSLTSKIINLPIDYFIYVCEQFDSVEWDKVSDRYSIPFSLAVNFIFLLMRIYIKSTHVPVQRNQLFVDKQSINTSRSWFRAFLSFLSICFLFISFLNFIFSTRFQNKLYRTLPQDKRTTTSTPNVKPVFQHSNNDDGDEQVFELKVWSPNQFLLNFACLFSPAHALILWFYSTSLRVTLLTFLLSFTTLHFVNKFSLLLKDQQYLHRQVFFEYDKKFVEPRLSVVKRDVAINTTRGPTTASIEYFTPRKPIDTFLEHRSSSHDHLTSTPRTPIALQRRSVHHLHDSGISRDSSSPFKRFPHLSDGSSRF</sequence>
<keyword id="KW-0256">Endoplasmic reticulum</keyword>
<keyword id="KW-0469">Meiosis</keyword>
<keyword id="KW-0472">Membrane</keyword>
<keyword id="KW-1185">Reference proteome</keyword>
<keyword id="KW-0812">Transmembrane</keyword>
<keyword id="KW-1133">Transmembrane helix</keyword>
<proteinExistence type="evidence at protein level"/>
<name>MU154_SCHPO</name>